<dbReference type="EC" id="4.1.1.23" evidence="1"/>
<dbReference type="EMBL" id="CP001638">
    <property type="protein sequence ID" value="ACS23910.1"/>
    <property type="molecule type" value="Genomic_DNA"/>
</dbReference>
<dbReference type="SMR" id="C5D8Q3"/>
<dbReference type="STRING" id="471223.GWCH70_1050"/>
<dbReference type="KEGG" id="gwc:GWCH70_1050"/>
<dbReference type="eggNOG" id="COG0284">
    <property type="taxonomic scope" value="Bacteria"/>
</dbReference>
<dbReference type="HOGENOM" id="CLU_067069_1_1_9"/>
<dbReference type="OrthoDB" id="9806203at2"/>
<dbReference type="UniPathway" id="UPA00070">
    <property type="reaction ID" value="UER00120"/>
</dbReference>
<dbReference type="GO" id="GO:0005829">
    <property type="term" value="C:cytosol"/>
    <property type="evidence" value="ECO:0007669"/>
    <property type="project" value="TreeGrafter"/>
</dbReference>
<dbReference type="GO" id="GO:0004590">
    <property type="term" value="F:orotidine-5'-phosphate decarboxylase activity"/>
    <property type="evidence" value="ECO:0007669"/>
    <property type="project" value="UniProtKB-UniRule"/>
</dbReference>
<dbReference type="GO" id="GO:0006207">
    <property type="term" value="P:'de novo' pyrimidine nucleobase biosynthetic process"/>
    <property type="evidence" value="ECO:0007669"/>
    <property type="project" value="InterPro"/>
</dbReference>
<dbReference type="GO" id="GO:0044205">
    <property type="term" value="P:'de novo' UMP biosynthetic process"/>
    <property type="evidence" value="ECO:0007669"/>
    <property type="project" value="UniProtKB-UniRule"/>
</dbReference>
<dbReference type="CDD" id="cd04725">
    <property type="entry name" value="OMP_decarboxylase_like"/>
    <property type="match status" value="1"/>
</dbReference>
<dbReference type="FunFam" id="3.20.20.70:FF:000015">
    <property type="entry name" value="Orotidine 5'-phosphate decarboxylase"/>
    <property type="match status" value="1"/>
</dbReference>
<dbReference type="Gene3D" id="3.20.20.70">
    <property type="entry name" value="Aldolase class I"/>
    <property type="match status" value="1"/>
</dbReference>
<dbReference type="HAMAP" id="MF_01200_B">
    <property type="entry name" value="OMPdecase_type1_B"/>
    <property type="match status" value="1"/>
</dbReference>
<dbReference type="InterPro" id="IPR013785">
    <property type="entry name" value="Aldolase_TIM"/>
</dbReference>
<dbReference type="InterPro" id="IPR014732">
    <property type="entry name" value="OMPdecase"/>
</dbReference>
<dbReference type="InterPro" id="IPR018089">
    <property type="entry name" value="OMPdecase_AS"/>
</dbReference>
<dbReference type="InterPro" id="IPR047596">
    <property type="entry name" value="OMPdecase_bac"/>
</dbReference>
<dbReference type="InterPro" id="IPR001754">
    <property type="entry name" value="OMPdeCOase_dom"/>
</dbReference>
<dbReference type="InterPro" id="IPR011060">
    <property type="entry name" value="RibuloseP-bd_barrel"/>
</dbReference>
<dbReference type="NCBIfam" id="NF001273">
    <property type="entry name" value="PRK00230.1"/>
    <property type="match status" value="1"/>
</dbReference>
<dbReference type="NCBIfam" id="TIGR01740">
    <property type="entry name" value="pyrF"/>
    <property type="match status" value="1"/>
</dbReference>
<dbReference type="PANTHER" id="PTHR32119">
    <property type="entry name" value="OROTIDINE 5'-PHOSPHATE DECARBOXYLASE"/>
    <property type="match status" value="1"/>
</dbReference>
<dbReference type="PANTHER" id="PTHR32119:SF2">
    <property type="entry name" value="OROTIDINE 5'-PHOSPHATE DECARBOXYLASE"/>
    <property type="match status" value="1"/>
</dbReference>
<dbReference type="Pfam" id="PF00215">
    <property type="entry name" value="OMPdecase"/>
    <property type="match status" value="1"/>
</dbReference>
<dbReference type="SMART" id="SM00934">
    <property type="entry name" value="OMPdecase"/>
    <property type="match status" value="1"/>
</dbReference>
<dbReference type="SUPFAM" id="SSF51366">
    <property type="entry name" value="Ribulose-phoshate binding barrel"/>
    <property type="match status" value="1"/>
</dbReference>
<dbReference type="PROSITE" id="PS00156">
    <property type="entry name" value="OMPDECASE"/>
    <property type="match status" value="1"/>
</dbReference>
<sequence>MNDPFIVALDFSSGKEVRTFLQPFSHTSLFVKVGMELYYQEGPAIIHSLKEQGHRIFLDLKLHDIPNTVKRAMQGLARLEVDLVNVHAAGGTRMMEAALEGLEAGTPNGARRPYCIAVTQLTSTSEQMLHNELWIGRTMEETVLHYAALAKQSGLDGVVCSAKEVPLIRKHCGEAFLTVTPGIRFADDEKNDQVRVVTPYEAKKLGASFIVIGRSITRAENPIAAYERLQQEWKGEEKK</sequence>
<evidence type="ECO:0000255" key="1">
    <source>
        <dbReference type="HAMAP-Rule" id="MF_01200"/>
    </source>
</evidence>
<feature type="chain" id="PRO_1000213821" description="Orotidine 5'-phosphate decarboxylase">
    <location>
        <begin position="1"/>
        <end position="239"/>
    </location>
</feature>
<feature type="active site" description="Proton donor" evidence="1">
    <location>
        <position position="61"/>
    </location>
</feature>
<feature type="binding site" evidence="1">
    <location>
        <position position="10"/>
    </location>
    <ligand>
        <name>substrate</name>
    </ligand>
</feature>
<feature type="binding site" evidence="1">
    <location>
        <position position="32"/>
    </location>
    <ligand>
        <name>substrate</name>
    </ligand>
</feature>
<feature type="binding site" evidence="1">
    <location>
        <begin position="59"/>
        <end position="68"/>
    </location>
    <ligand>
        <name>substrate</name>
    </ligand>
</feature>
<feature type="binding site" evidence="1">
    <location>
        <position position="122"/>
    </location>
    <ligand>
        <name>substrate</name>
    </ligand>
</feature>
<feature type="binding site" evidence="1">
    <location>
        <position position="184"/>
    </location>
    <ligand>
        <name>substrate</name>
    </ligand>
</feature>
<feature type="binding site" evidence="1">
    <location>
        <position position="193"/>
    </location>
    <ligand>
        <name>substrate</name>
    </ligand>
</feature>
<feature type="binding site" evidence="1">
    <location>
        <position position="213"/>
    </location>
    <ligand>
        <name>substrate</name>
    </ligand>
</feature>
<feature type="binding site" evidence="1">
    <location>
        <position position="214"/>
    </location>
    <ligand>
        <name>substrate</name>
    </ligand>
</feature>
<keyword id="KW-0210">Decarboxylase</keyword>
<keyword id="KW-0456">Lyase</keyword>
<keyword id="KW-0665">Pyrimidine biosynthesis</keyword>
<protein>
    <recommendedName>
        <fullName evidence="1">Orotidine 5'-phosphate decarboxylase</fullName>
        <ecNumber evidence="1">4.1.1.23</ecNumber>
    </recommendedName>
    <alternativeName>
        <fullName evidence="1">OMP decarboxylase</fullName>
        <shortName evidence="1">OMPDCase</shortName>
        <shortName evidence="1">OMPdecase</shortName>
    </alternativeName>
</protein>
<proteinExistence type="inferred from homology"/>
<comment type="function">
    <text evidence="1">Catalyzes the decarboxylation of orotidine 5'-monophosphate (OMP) to uridine 5'-monophosphate (UMP).</text>
</comment>
<comment type="catalytic activity">
    <reaction evidence="1">
        <text>orotidine 5'-phosphate + H(+) = UMP + CO2</text>
        <dbReference type="Rhea" id="RHEA:11596"/>
        <dbReference type="ChEBI" id="CHEBI:15378"/>
        <dbReference type="ChEBI" id="CHEBI:16526"/>
        <dbReference type="ChEBI" id="CHEBI:57538"/>
        <dbReference type="ChEBI" id="CHEBI:57865"/>
        <dbReference type="EC" id="4.1.1.23"/>
    </reaction>
</comment>
<comment type="pathway">
    <text evidence="1">Pyrimidine metabolism; UMP biosynthesis via de novo pathway; UMP from orotate: step 2/2.</text>
</comment>
<comment type="subunit">
    <text evidence="1">Homodimer.</text>
</comment>
<comment type="similarity">
    <text evidence="1">Belongs to the OMP decarboxylase family. Type 1 subfamily.</text>
</comment>
<accession>C5D8Q3</accession>
<reference key="1">
    <citation type="submission" date="2009-06" db="EMBL/GenBank/DDBJ databases">
        <title>Complete sequence of chromosome of Geopacillus sp. WCH70.</title>
        <authorList>
            <consortium name="US DOE Joint Genome Institute"/>
            <person name="Lucas S."/>
            <person name="Copeland A."/>
            <person name="Lapidus A."/>
            <person name="Glavina del Rio T."/>
            <person name="Dalin E."/>
            <person name="Tice H."/>
            <person name="Bruce D."/>
            <person name="Goodwin L."/>
            <person name="Pitluck S."/>
            <person name="Chertkov O."/>
            <person name="Brettin T."/>
            <person name="Detter J.C."/>
            <person name="Han C."/>
            <person name="Larimer F."/>
            <person name="Land M."/>
            <person name="Hauser L."/>
            <person name="Kyrpides N."/>
            <person name="Mikhailova N."/>
            <person name="Brumm P."/>
            <person name="Mead D.A."/>
            <person name="Richardson P."/>
        </authorList>
    </citation>
    <scope>NUCLEOTIDE SEQUENCE [LARGE SCALE GENOMIC DNA]</scope>
    <source>
        <strain>WCH70</strain>
    </source>
</reference>
<gene>
    <name evidence="1" type="primary">pyrF</name>
    <name type="ordered locus">GWCH70_1050</name>
</gene>
<organism>
    <name type="scientific">Geobacillus sp. (strain WCH70)</name>
    <dbReference type="NCBI Taxonomy" id="471223"/>
    <lineage>
        <taxon>Bacteria</taxon>
        <taxon>Bacillati</taxon>
        <taxon>Bacillota</taxon>
        <taxon>Bacilli</taxon>
        <taxon>Bacillales</taxon>
        <taxon>Anoxybacillaceae</taxon>
        <taxon>Geobacillus</taxon>
    </lineage>
</organism>
<name>PYRF_GEOSW</name>